<sequence>MAADEDELNLLVIIVDTNPIWWGKQALKESQFTLSKCMDAVMVLANAHLFMNRSNQLAVIASHIQESRFLYPGKNGRLGDFFGDPGNALPDCNPSGSKDGKYELLTAANEVIAEEIKDLMTKSDIKGQHTETLLAGSLAKALCYIHRASKAVKDNQEMKSRILVIKAAEDSALQYMNFMNVIFAAQKQNILIDACVLDSDSGLLQQACDITGGLYLKVPQMPSLLQYLLWVFLPDQDQRSQLILPPPIHVDYRAACFCHRSLIEIGYVCSVCLSIFCNFSPICTTCETAFKISLPPVLKAKKKKQKVSL</sequence>
<organism>
    <name type="scientific">Rattus norvegicus</name>
    <name type="common">Rat</name>
    <dbReference type="NCBI Taxonomy" id="10116"/>
    <lineage>
        <taxon>Eukaryota</taxon>
        <taxon>Metazoa</taxon>
        <taxon>Chordata</taxon>
        <taxon>Craniata</taxon>
        <taxon>Vertebrata</taxon>
        <taxon>Euteleostomi</taxon>
        <taxon>Mammalia</taxon>
        <taxon>Eutheria</taxon>
        <taxon>Euarchontoglires</taxon>
        <taxon>Glires</taxon>
        <taxon>Rodentia</taxon>
        <taxon>Myomorpha</taxon>
        <taxon>Muroidea</taxon>
        <taxon>Muridae</taxon>
        <taxon>Murinae</taxon>
        <taxon>Rattus</taxon>
    </lineage>
</organism>
<feature type="chain" id="PRO_0000329322" description="General transcription factor IIH subunit 3">
    <location>
        <begin position="1"/>
        <end position="309"/>
    </location>
</feature>
<feature type="zinc finger region" description="C4-type">
    <location>
        <begin position="269"/>
        <end position="286"/>
    </location>
</feature>
<accession>Q561R7</accession>
<keyword id="KW-0227">DNA damage</keyword>
<keyword id="KW-0234">DNA repair</keyword>
<keyword id="KW-0479">Metal-binding</keyword>
<keyword id="KW-0539">Nucleus</keyword>
<keyword id="KW-1185">Reference proteome</keyword>
<keyword id="KW-0804">Transcription</keyword>
<keyword id="KW-0805">Transcription regulation</keyword>
<keyword id="KW-0862">Zinc</keyword>
<keyword id="KW-0863">Zinc-finger</keyword>
<evidence type="ECO:0000250" key="1">
    <source>
        <dbReference type="UniProtKB" id="Q13889"/>
    </source>
</evidence>
<evidence type="ECO:0000250" key="2">
    <source>
        <dbReference type="UniProtKB" id="Q8VD76"/>
    </source>
</evidence>
<evidence type="ECO:0000305" key="3"/>
<comment type="function">
    <text evidence="1">Component of the general transcription and DNA repair factor IIH (TFIIH) core complex, which is involved in general and transcription-coupled nucleotide excision repair (NER) of damaged DNA and, when complexed to CAK, in RNA transcription by RNA polymerase II. In NER, TFIIH acts by opening DNA around the lesion to allow the excision of the damaged oligonucleotide and its replacement by a new DNA fragment. In transcription, TFIIH has an essential role in transcription initiation. When the pre-initiation complex (PIC) has been established, TFIIH is required for promoter opening and promoter escape. Phosphorylation of the C-terminal tail (CTD) of the largest subunit of RNA polymerase II by the kinase module CAK controls the initiation of transcription.</text>
</comment>
<comment type="subunit">
    <text evidence="1 2">Part of a TFIID-containing RNA polymerase II pre-initiation complex that is composed of TBP and at least GTF2A1, GTF2A2, GTF2E1, GTF2E2, GTF2F1, GTF2H2, GTF2H3, GTF2H4, GTF2H5, GTF2B, TCEA1, ERCC2, ERCC3, TAF1, TAF2, TAF3, TAF4, TAF5, TAF6, TAF7, TAF8, TAF9, TAF10, TAF11, TAF12 and TAF13. Component of the 7-subunit TFIIH core complex composed of XPB/ERCC3, XPD/ERCC2, GTF2H1, GTF2H2, GTF2H3, GTF2H4 and GTF2H5, which is active in NER. The core complex associates with the 3-subunit CDK-activating kinase (CAK) module composed of CCNH/cyclin H, CDK7 and MNAT1 to form the 10-subunit holoenzyme (holo-TFIIH) active in transcription (By similarity). Interacts with RARA; the interaction requires prior phosphorylation of RARA on 'Ser-369' which then enhances interaction of RARA with CDK7 (By similarity).</text>
</comment>
<comment type="subcellular location">
    <subcellularLocation>
        <location evidence="1">Nucleus</location>
    </subcellularLocation>
</comment>
<comment type="similarity">
    <text evidence="3">Belongs to the TFB4 family.</text>
</comment>
<protein>
    <recommendedName>
        <fullName>General transcription factor IIH subunit 3</fullName>
    </recommendedName>
    <alternativeName>
        <fullName>General transcription factor IIH polypeptide 3</fullName>
    </alternativeName>
</protein>
<dbReference type="EMBL" id="BC093380">
    <property type="protein sequence ID" value="AAH93380.1"/>
    <property type="molecule type" value="mRNA"/>
</dbReference>
<dbReference type="RefSeq" id="NP_001019407.1">
    <property type="nucleotide sequence ID" value="NM_001024236.1"/>
</dbReference>
<dbReference type="RefSeq" id="XP_063127243.1">
    <property type="nucleotide sequence ID" value="XM_063271173.1"/>
</dbReference>
<dbReference type="SMR" id="Q561R7"/>
<dbReference type="FunCoup" id="Q561R7">
    <property type="interactions" value="2997"/>
</dbReference>
<dbReference type="STRING" id="10116.ENSRNOP00000001368"/>
<dbReference type="PhosphoSitePlus" id="Q561R7"/>
<dbReference type="PaxDb" id="10116-ENSRNOP00000001368"/>
<dbReference type="Ensembl" id="ENSRNOT00000001368.7">
    <property type="protein sequence ID" value="ENSRNOP00000001368.4"/>
    <property type="gene ID" value="ENSRNOG00000001035.7"/>
</dbReference>
<dbReference type="GeneID" id="288651"/>
<dbReference type="KEGG" id="rno:288651"/>
<dbReference type="UCSC" id="RGD:1305494">
    <property type="organism name" value="rat"/>
</dbReference>
<dbReference type="AGR" id="RGD:1305494"/>
<dbReference type="CTD" id="2967"/>
<dbReference type="RGD" id="1305494">
    <property type="gene designation" value="Gtf2h3"/>
</dbReference>
<dbReference type="eggNOG" id="KOG2487">
    <property type="taxonomic scope" value="Eukaryota"/>
</dbReference>
<dbReference type="GeneTree" id="ENSGT00390000013143"/>
<dbReference type="HOGENOM" id="CLU_040211_1_0_1"/>
<dbReference type="InParanoid" id="Q561R7"/>
<dbReference type="OrthoDB" id="14978at9989"/>
<dbReference type="PhylomeDB" id="Q561R7"/>
<dbReference type="TreeFam" id="TF314336"/>
<dbReference type="Reactome" id="R-RNO-112382">
    <property type="pathway name" value="Formation of RNA Pol II elongation complex"/>
</dbReference>
<dbReference type="Reactome" id="R-RNO-113418">
    <property type="pathway name" value="Formation of the Early Elongation Complex"/>
</dbReference>
<dbReference type="Reactome" id="R-RNO-5696395">
    <property type="pathway name" value="Formation of Incision Complex in GG-NER"/>
</dbReference>
<dbReference type="Reactome" id="R-RNO-5696400">
    <property type="pathway name" value="Dual Incision in GG-NER"/>
</dbReference>
<dbReference type="Reactome" id="R-RNO-674695">
    <property type="pathway name" value="RNA Polymerase II Pre-transcription Events"/>
</dbReference>
<dbReference type="Reactome" id="R-RNO-6781823">
    <property type="pathway name" value="Formation of TC-NER Pre-Incision Complex"/>
</dbReference>
<dbReference type="Reactome" id="R-RNO-6782135">
    <property type="pathway name" value="Dual incision in TC-NER"/>
</dbReference>
<dbReference type="Reactome" id="R-RNO-6782210">
    <property type="pathway name" value="Gap-filling DNA repair synthesis and ligation in TC-NER"/>
</dbReference>
<dbReference type="Reactome" id="R-RNO-6796648">
    <property type="pathway name" value="TP53 Regulates Transcription of DNA Repair Genes"/>
</dbReference>
<dbReference type="Reactome" id="R-RNO-72086">
    <property type="pathway name" value="mRNA Capping"/>
</dbReference>
<dbReference type="Reactome" id="R-RNO-73762">
    <property type="pathway name" value="RNA Polymerase I Transcription Initiation"/>
</dbReference>
<dbReference type="Reactome" id="R-RNO-73772">
    <property type="pathway name" value="RNA Polymerase I Promoter Escape"/>
</dbReference>
<dbReference type="Reactome" id="R-RNO-73776">
    <property type="pathway name" value="RNA Polymerase II Promoter Escape"/>
</dbReference>
<dbReference type="Reactome" id="R-RNO-73779">
    <property type="pathway name" value="RNA Polymerase II Transcription Pre-Initiation And Promoter Opening"/>
</dbReference>
<dbReference type="Reactome" id="R-RNO-73863">
    <property type="pathway name" value="RNA Polymerase I Transcription Termination"/>
</dbReference>
<dbReference type="Reactome" id="R-RNO-75953">
    <property type="pathway name" value="RNA Polymerase II Transcription Initiation"/>
</dbReference>
<dbReference type="Reactome" id="R-RNO-75955">
    <property type="pathway name" value="RNA Polymerase II Transcription Elongation"/>
</dbReference>
<dbReference type="Reactome" id="R-RNO-76042">
    <property type="pathway name" value="RNA Polymerase II Transcription Initiation And Promoter Clearance"/>
</dbReference>
<dbReference type="Reactome" id="R-RNO-77075">
    <property type="pathway name" value="RNA Pol II CTD phosphorylation and interaction with CE"/>
</dbReference>
<dbReference type="PRO" id="PR:Q561R7"/>
<dbReference type="Proteomes" id="UP000002494">
    <property type="component" value="Chromosome 12"/>
</dbReference>
<dbReference type="Bgee" id="ENSRNOG00000001035">
    <property type="expression patterns" value="Expressed in thymus and 20 other cell types or tissues"/>
</dbReference>
<dbReference type="GO" id="GO:0000438">
    <property type="term" value="C:core TFIIH complex portion of holo TFIIH complex"/>
    <property type="evidence" value="ECO:0000250"/>
    <property type="project" value="UniProtKB"/>
</dbReference>
<dbReference type="GO" id="GO:0005634">
    <property type="term" value="C:nucleus"/>
    <property type="evidence" value="ECO:0000250"/>
    <property type="project" value="UniProtKB"/>
</dbReference>
<dbReference type="GO" id="GO:0005669">
    <property type="term" value="C:transcription factor TFIID complex"/>
    <property type="evidence" value="ECO:0000266"/>
    <property type="project" value="RGD"/>
</dbReference>
<dbReference type="GO" id="GO:0000439">
    <property type="term" value="C:transcription factor TFIIH core complex"/>
    <property type="evidence" value="ECO:0000318"/>
    <property type="project" value="GO_Central"/>
</dbReference>
<dbReference type="GO" id="GO:0005675">
    <property type="term" value="C:transcription factor TFIIH holo complex"/>
    <property type="evidence" value="ECO:0000250"/>
    <property type="project" value="UniProtKB"/>
</dbReference>
<dbReference type="GO" id="GO:0097550">
    <property type="term" value="C:transcription preinitiation complex"/>
    <property type="evidence" value="ECO:0000266"/>
    <property type="project" value="RGD"/>
</dbReference>
<dbReference type="GO" id="GO:0016251">
    <property type="term" value="F:RNA polymerase II general transcription initiation factor activity"/>
    <property type="evidence" value="ECO:0000266"/>
    <property type="project" value="RGD"/>
</dbReference>
<dbReference type="GO" id="GO:0008270">
    <property type="term" value="F:zinc ion binding"/>
    <property type="evidence" value="ECO:0007669"/>
    <property type="project" value="UniProtKB-KW"/>
</dbReference>
<dbReference type="GO" id="GO:0006289">
    <property type="term" value="P:nucleotide-excision repair"/>
    <property type="evidence" value="ECO:0000318"/>
    <property type="project" value="GO_Central"/>
</dbReference>
<dbReference type="GO" id="GO:0006355">
    <property type="term" value="P:regulation of DNA-templated transcription"/>
    <property type="evidence" value="ECO:0007669"/>
    <property type="project" value="InterPro"/>
</dbReference>
<dbReference type="GO" id="GO:0006366">
    <property type="term" value="P:transcription by RNA polymerase II"/>
    <property type="evidence" value="ECO:0000250"/>
    <property type="project" value="UniProtKB"/>
</dbReference>
<dbReference type="FunFam" id="3.40.50.410:FF:000045">
    <property type="entry name" value="general transcription factor IIH subunit 3 isoform X1"/>
    <property type="match status" value="1"/>
</dbReference>
<dbReference type="Gene3D" id="3.40.50.410">
    <property type="entry name" value="von Willebrand factor, type A domain"/>
    <property type="match status" value="1"/>
</dbReference>
<dbReference type="InterPro" id="IPR004600">
    <property type="entry name" value="TFIIH_Tfb4/GTF2H3"/>
</dbReference>
<dbReference type="InterPro" id="IPR036465">
    <property type="entry name" value="vWFA_dom_sf"/>
</dbReference>
<dbReference type="NCBIfam" id="TIGR00627">
    <property type="entry name" value="tfb4"/>
    <property type="match status" value="1"/>
</dbReference>
<dbReference type="PANTHER" id="PTHR12831:SF0">
    <property type="entry name" value="GENERAL TRANSCRIPTION FACTOR IIH SUBUNIT 3"/>
    <property type="match status" value="1"/>
</dbReference>
<dbReference type="PANTHER" id="PTHR12831">
    <property type="entry name" value="TRANSCRIPTION INITIATION FACTOR IIH TFIIH , POLYPEPTIDE 3-RELATED"/>
    <property type="match status" value="1"/>
</dbReference>
<dbReference type="Pfam" id="PF03850">
    <property type="entry name" value="Tfb4"/>
    <property type="match status" value="1"/>
</dbReference>
<name>TF2H3_RAT</name>
<gene>
    <name type="primary">Gtf2h3</name>
</gene>
<proteinExistence type="evidence at transcript level"/>
<reference key="1">
    <citation type="journal article" date="2004" name="Genome Res.">
        <title>The status, quality, and expansion of the NIH full-length cDNA project: the Mammalian Gene Collection (MGC).</title>
        <authorList>
            <consortium name="The MGC Project Team"/>
        </authorList>
    </citation>
    <scope>NUCLEOTIDE SEQUENCE [LARGE SCALE MRNA]</scope>
    <source>
        <tissue>Thymus</tissue>
    </source>
</reference>